<feature type="chain" id="PRO_0000305374" description="Glycerol phosphate lipoteichoic acid synthase">
    <location>
        <begin position="1"/>
        <end position="217"/>
    </location>
</feature>
<feature type="chain" id="PRO_0000305375" description="Processed glycerol phosphate lipoteichoic acid synthase">
    <location>
        <begin position="218"/>
        <end position="646"/>
    </location>
</feature>
<feature type="topological domain" description="Cytoplasmic" evidence="2">
    <location>
        <begin position="1"/>
        <end position="7"/>
    </location>
</feature>
<feature type="transmembrane region" description="Helical" evidence="2">
    <location>
        <begin position="8"/>
        <end position="28"/>
    </location>
</feature>
<feature type="topological domain" description="Extracellular" evidence="2">
    <location>
        <begin position="29"/>
        <end position="43"/>
    </location>
</feature>
<feature type="transmembrane region" description="Helical" evidence="2">
    <location>
        <begin position="44"/>
        <end position="64"/>
    </location>
</feature>
<feature type="topological domain" description="Cytoplasmic" evidence="2">
    <location>
        <begin position="65"/>
        <end position="68"/>
    </location>
</feature>
<feature type="transmembrane region" description="Helical" evidence="2">
    <location>
        <begin position="69"/>
        <end position="89"/>
    </location>
</feature>
<feature type="topological domain" description="Extracellular" evidence="2">
    <location>
        <begin position="90"/>
        <end position="119"/>
    </location>
</feature>
<feature type="transmembrane region" description="Helical" evidence="2">
    <location>
        <begin position="120"/>
        <end position="140"/>
    </location>
</feature>
<feature type="topological domain" description="Cytoplasmic" evidence="2">
    <location>
        <begin position="141"/>
        <end position="153"/>
    </location>
</feature>
<feature type="transmembrane region" description="Helical" evidence="2">
    <location>
        <begin position="154"/>
        <end position="174"/>
    </location>
</feature>
<feature type="topological domain" description="Extracellular" evidence="2">
    <location>
        <begin position="175"/>
        <end position="646"/>
    </location>
</feature>
<feature type="region of interest" description="Disordered" evidence="3">
    <location>
        <begin position="579"/>
        <end position="646"/>
    </location>
</feature>
<feature type="compositionally biased region" description="Basic and acidic residues" evidence="3">
    <location>
        <begin position="580"/>
        <end position="607"/>
    </location>
</feature>
<feature type="compositionally biased region" description="Basic and acidic residues" evidence="3">
    <location>
        <begin position="625"/>
        <end position="646"/>
    </location>
</feature>
<feature type="active site" evidence="1">
    <location>
        <position position="300"/>
    </location>
</feature>
<feature type="binding site" evidence="1">
    <location>
        <position position="255"/>
    </location>
    <ligand>
        <name>Mn(2+)</name>
        <dbReference type="ChEBI" id="CHEBI:29035"/>
    </ligand>
</feature>
<feature type="binding site" evidence="1">
    <location>
        <position position="300"/>
    </location>
    <ligand>
        <name>Mn(2+)</name>
        <dbReference type="ChEBI" id="CHEBI:29035"/>
    </ligand>
</feature>
<feature type="binding site" evidence="1">
    <location>
        <position position="416"/>
    </location>
    <ligand>
        <name>substrate</name>
    </ligand>
</feature>
<feature type="binding site" evidence="1">
    <location>
        <position position="475"/>
    </location>
    <ligand>
        <name>Mn(2+)</name>
        <dbReference type="ChEBI" id="CHEBI:29035"/>
    </ligand>
</feature>
<feature type="binding site" evidence="1">
    <location>
        <position position="476"/>
    </location>
    <ligand>
        <name>Mn(2+)</name>
        <dbReference type="ChEBI" id="CHEBI:29035"/>
    </ligand>
</feature>
<feature type="site" description="Cleavage" evidence="1">
    <location>
        <begin position="217"/>
        <end position="218"/>
    </location>
</feature>
<protein>
    <recommendedName>
        <fullName>Lipoteichoic acid synthase</fullName>
    </recommendedName>
    <component>
        <recommendedName>
            <fullName>Glycerol phosphate lipoteichoic acid synthase</fullName>
            <shortName>LTA synthase</shortName>
            <ecNumber>2.7.8.-</ecNumber>
        </recommendedName>
        <alternativeName>
            <fullName>Polyglycerol phosphate synthase</fullName>
        </alternativeName>
    </component>
    <component>
        <recommendedName>
            <fullName>Processed glycerol phosphate lipoteichoic acid synthase</fullName>
        </recommendedName>
    </component>
</protein>
<keyword id="KW-1003">Cell membrane</keyword>
<keyword id="KW-0961">Cell wall biogenesis/degradation</keyword>
<keyword id="KW-0464">Manganese</keyword>
<keyword id="KW-0472">Membrane</keyword>
<keyword id="KW-0479">Metal-binding</keyword>
<keyword id="KW-1185">Reference proteome</keyword>
<keyword id="KW-0964">Secreted</keyword>
<keyword id="KW-0808">Transferase</keyword>
<keyword id="KW-0812">Transmembrane</keyword>
<keyword id="KW-1133">Transmembrane helix</keyword>
<gene>
    <name type="primary">ltaS</name>
    <name type="ordered locus">SSP2001</name>
</gene>
<dbReference type="EC" id="2.7.8.-"/>
<dbReference type="EMBL" id="AP008934">
    <property type="protein sequence ID" value="BAE19146.1"/>
    <property type="molecule type" value="Genomic_DNA"/>
</dbReference>
<dbReference type="RefSeq" id="WP_011303659.1">
    <property type="nucleotide sequence ID" value="NZ_MTGA01000039.1"/>
</dbReference>
<dbReference type="SMR" id="Q49VR4"/>
<dbReference type="GeneID" id="3616715"/>
<dbReference type="KEGG" id="ssp:SSP2001"/>
<dbReference type="PATRIC" id="fig|342451.11.peg.1995"/>
<dbReference type="eggNOG" id="COG1368">
    <property type="taxonomic scope" value="Bacteria"/>
</dbReference>
<dbReference type="HOGENOM" id="CLU_021310_0_0_9"/>
<dbReference type="OrthoDB" id="5901192at2"/>
<dbReference type="UniPathway" id="UPA00556"/>
<dbReference type="Proteomes" id="UP000006371">
    <property type="component" value="Chromosome"/>
</dbReference>
<dbReference type="GO" id="GO:0005576">
    <property type="term" value="C:extracellular region"/>
    <property type="evidence" value="ECO:0007669"/>
    <property type="project" value="UniProtKB-SubCell"/>
</dbReference>
<dbReference type="GO" id="GO:0005886">
    <property type="term" value="C:plasma membrane"/>
    <property type="evidence" value="ECO:0007669"/>
    <property type="project" value="UniProtKB-SubCell"/>
</dbReference>
<dbReference type="GO" id="GO:0046872">
    <property type="term" value="F:metal ion binding"/>
    <property type="evidence" value="ECO:0007669"/>
    <property type="project" value="UniProtKB-KW"/>
</dbReference>
<dbReference type="GO" id="GO:0016740">
    <property type="term" value="F:transferase activity"/>
    <property type="evidence" value="ECO:0007669"/>
    <property type="project" value="UniProtKB-KW"/>
</dbReference>
<dbReference type="GO" id="GO:0071555">
    <property type="term" value="P:cell wall organization"/>
    <property type="evidence" value="ECO:0007669"/>
    <property type="project" value="UniProtKB-KW"/>
</dbReference>
<dbReference type="GO" id="GO:0070395">
    <property type="term" value="P:lipoteichoic acid biosynthetic process"/>
    <property type="evidence" value="ECO:0007669"/>
    <property type="project" value="UniProtKB-UniPathway"/>
</dbReference>
<dbReference type="CDD" id="cd16015">
    <property type="entry name" value="LTA_synthase"/>
    <property type="match status" value="1"/>
</dbReference>
<dbReference type="Gene3D" id="3.30.1120.170">
    <property type="match status" value="1"/>
</dbReference>
<dbReference type="Gene3D" id="3.40.720.10">
    <property type="entry name" value="Alkaline Phosphatase, subunit A"/>
    <property type="match status" value="1"/>
</dbReference>
<dbReference type="InterPro" id="IPR017850">
    <property type="entry name" value="Alkaline_phosphatase_core_sf"/>
</dbReference>
<dbReference type="InterPro" id="IPR012160">
    <property type="entry name" value="LtaS-like"/>
</dbReference>
<dbReference type="InterPro" id="IPR050448">
    <property type="entry name" value="OpgB/LTA_synthase_biosynth"/>
</dbReference>
<dbReference type="InterPro" id="IPR000917">
    <property type="entry name" value="Sulfatase_N"/>
</dbReference>
<dbReference type="PANTHER" id="PTHR47371">
    <property type="entry name" value="LIPOTEICHOIC ACID SYNTHASE"/>
    <property type="match status" value="1"/>
</dbReference>
<dbReference type="PANTHER" id="PTHR47371:SF3">
    <property type="entry name" value="PHOSPHOGLYCEROL TRANSFERASE I"/>
    <property type="match status" value="1"/>
</dbReference>
<dbReference type="Pfam" id="PF00884">
    <property type="entry name" value="Sulfatase"/>
    <property type="match status" value="1"/>
</dbReference>
<dbReference type="PIRSF" id="PIRSF005091">
    <property type="entry name" value="Mmb_sulf_HI1246"/>
    <property type="match status" value="1"/>
</dbReference>
<dbReference type="SUPFAM" id="SSF53649">
    <property type="entry name" value="Alkaline phosphatase-like"/>
    <property type="match status" value="1"/>
</dbReference>
<comment type="function">
    <text evidence="1">Catalyzes the polymerization of lipoteichoic acid (LTA) polyglycerol phosphate, a reaction that presumably uses phosphatidylglycerol (PG) as substrate. Is required for staphylococcal growth and cell division process (By similarity).</text>
</comment>
<comment type="pathway">
    <text>Cell wall biogenesis; lipoteichoic acid biosynthesis.</text>
</comment>
<comment type="subcellular location">
    <subcellularLocation>
        <location evidence="4">Cell membrane</location>
        <topology evidence="4">Multi-pass membrane protein</topology>
    </subcellularLocation>
</comment>
<comment type="subcellular location">
    <molecule>Processed glycerol phosphate lipoteichoic acid synthase</molecule>
    <subcellularLocation>
        <location evidence="1">Secreted</location>
    </subcellularLocation>
</comment>
<comment type="PTM">
    <text evidence="1">Proteolytically cleaved.</text>
</comment>
<comment type="similarity">
    <text evidence="4">Belongs to the LTA synthase family.</text>
</comment>
<reference key="1">
    <citation type="journal article" date="2005" name="Proc. Natl. Acad. Sci. U.S.A.">
        <title>Whole genome sequence of Staphylococcus saprophyticus reveals the pathogenesis of uncomplicated urinary tract infection.</title>
        <authorList>
            <person name="Kuroda M."/>
            <person name="Yamashita A."/>
            <person name="Hirakawa H."/>
            <person name="Kumano M."/>
            <person name="Morikawa K."/>
            <person name="Higashide M."/>
            <person name="Maruyama A."/>
            <person name="Inose Y."/>
            <person name="Matoba K."/>
            <person name="Toh H."/>
            <person name="Kuhara S."/>
            <person name="Hattori M."/>
            <person name="Ohta T."/>
        </authorList>
    </citation>
    <scope>NUCLEOTIDE SEQUENCE [LARGE SCALE GENOMIC DNA]</scope>
    <source>
        <strain>ATCC 15305 / DSM 20229 / NCIMB 8711 / NCTC 7292 / S-41</strain>
    </source>
</reference>
<organism>
    <name type="scientific">Staphylococcus saprophyticus subsp. saprophyticus (strain ATCC 15305 / DSM 20229 / NCIMB 8711 / NCTC 7292 / S-41)</name>
    <dbReference type="NCBI Taxonomy" id="342451"/>
    <lineage>
        <taxon>Bacteria</taxon>
        <taxon>Bacillati</taxon>
        <taxon>Bacillota</taxon>
        <taxon>Bacilli</taxon>
        <taxon>Bacillales</taxon>
        <taxon>Staphylococcaceae</taxon>
        <taxon>Staphylococcus</taxon>
    </lineage>
</organism>
<proteinExistence type="inferred from homology"/>
<sequence length="646" mass="74912">MKLHKKKLTLFAFFILTVLTVTLKTYFSYYVDFSLGVKGLVQNLILLMNPYSLIALVLSIFLFFKGKKAFWFIFIGGFILTFLLYANVVYFRFFSDFLTFSTLNQAGNVESMGGAVTASFKWYDFVYFIDTIIYLFVLIFKQKWLDKRVFSKKFVPVVMAASIALFFLNLAFAESDRPELLTRTFDHKYLVKYLGPYNFTVYDGVKTIQNNQQKALANEDDLTKVLNYTKQKQTEPNKEYFGAAKKKNIIKIHLESFQTFLINKKVNGEEVTPFLNKLSTGNEGYRYYPNFYHQTGQGKTSDSEFTMDNSLFGLPQGSAYSLKGDNTYQSLPAILDQQQGYTSSVMHGDYKTFWNRDQVYKHFGIDKFYDATYYDMSEDNIENLGLKDKEFFKESADYLAKEKQPFYNHLITLTNHYPFTVSPEDASIEKPNTGDSTVDGYIQTARYLDESLEEFVNELKKKGLYDDSVIMIYGDHYGISENHNKAMEKLLGEDITPAKFNDLNRTGFWLKIPGKEGTVDKTYAGQADVMPTILHLMGIDTKNYLMMGTDLLSKDHNDTVPFRNGDFVTKDYKYVNGRIYDNKNNEPMTEKPKDFEKRKQQSEKDLQMSDDVLNGDLLRFYDNPDFDKIKPSEYEYKTGPKGQERK</sequence>
<name>LTAS_STAS1</name>
<evidence type="ECO:0000250" key="1"/>
<evidence type="ECO:0000255" key="2"/>
<evidence type="ECO:0000256" key="3">
    <source>
        <dbReference type="SAM" id="MobiDB-lite"/>
    </source>
</evidence>
<evidence type="ECO:0000305" key="4"/>
<accession>Q49VR4</accession>